<accession>P51834</accession>
<accession>O31735</accession>
<organism>
    <name type="scientific">Bacillus subtilis (strain 168)</name>
    <dbReference type="NCBI Taxonomy" id="224308"/>
    <lineage>
        <taxon>Bacteria</taxon>
        <taxon>Bacillati</taxon>
        <taxon>Bacillota</taxon>
        <taxon>Bacilli</taxon>
        <taxon>Bacillales</taxon>
        <taxon>Bacillaceae</taxon>
        <taxon>Bacillus</taxon>
    </lineage>
</organism>
<gene>
    <name evidence="1" type="primary">smc</name>
    <name type="synonym">ylqA</name>
    <name type="ordered locus">BSU15940</name>
</gene>
<name>SMC_BACSU</name>
<protein>
    <recommendedName>
        <fullName evidence="1">Chromosome partition protein Smc</fullName>
    </recommendedName>
</protein>
<keyword id="KW-0002">3D-structure</keyword>
<keyword id="KW-0067">ATP-binding</keyword>
<keyword id="KW-0175">Coiled coil</keyword>
<keyword id="KW-0963">Cytoplasm</keyword>
<keyword id="KW-0238">DNA-binding</keyword>
<keyword id="KW-0547">Nucleotide-binding</keyword>
<keyword id="KW-1185">Reference proteome</keyword>
<dbReference type="EMBL" id="D64116">
    <property type="protein sequence ID" value="BAA10977.1"/>
    <property type="molecule type" value="Genomic_DNA"/>
</dbReference>
<dbReference type="EMBL" id="AL009126">
    <property type="protein sequence ID" value="CAB13467.2"/>
    <property type="molecule type" value="Genomic_DNA"/>
</dbReference>
<dbReference type="EMBL" id="D49781">
    <property type="protein sequence ID" value="BAA08615.1"/>
    <property type="molecule type" value="Genomic_DNA"/>
</dbReference>
<dbReference type="PIR" id="G69708">
    <property type="entry name" value="G69708"/>
</dbReference>
<dbReference type="RefSeq" id="NP_389476.2">
    <property type="nucleotide sequence ID" value="NC_000964.3"/>
</dbReference>
<dbReference type="RefSeq" id="WP_003232028.1">
    <property type="nucleotide sequence ID" value="NZ_OZ025638.1"/>
</dbReference>
<dbReference type="PDB" id="3ZGX">
    <property type="method" value="X-ray"/>
    <property type="resolution" value="3.40 A"/>
    <property type="chains" value="A/B=1-219, A/B=983-1186"/>
</dbReference>
<dbReference type="PDB" id="5H66">
    <property type="method" value="X-ray"/>
    <property type="resolution" value="1.82 A"/>
    <property type="chains" value="A=1-199, B=1000-1186"/>
</dbReference>
<dbReference type="PDB" id="5H67">
    <property type="method" value="X-ray"/>
    <property type="resolution" value="2.07 A"/>
    <property type="chains" value="A=1-199, B=1000-1186"/>
</dbReference>
<dbReference type="PDB" id="5NMO">
    <property type="method" value="X-ray"/>
    <property type="resolution" value="1.90 A"/>
    <property type="chains" value="A/B=870-915, A/B=922-1011"/>
</dbReference>
<dbReference type="PDB" id="5NNV">
    <property type="method" value="X-ray"/>
    <property type="resolution" value="3.29 A"/>
    <property type="chains" value="A/B/C/D=668-929"/>
</dbReference>
<dbReference type="PDB" id="5XG3">
    <property type="method" value="X-ray"/>
    <property type="resolution" value="3.50 A"/>
    <property type="chains" value="A/B=1-219, A/B=224-259"/>
</dbReference>
<dbReference type="PDBsum" id="3ZGX"/>
<dbReference type="PDBsum" id="5H66"/>
<dbReference type="PDBsum" id="5H67"/>
<dbReference type="PDBsum" id="5NMO"/>
<dbReference type="PDBsum" id="5NNV"/>
<dbReference type="PDBsum" id="5XG3"/>
<dbReference type="SMR" id="P51834"/>
<dbReference type="DIP" id="DIP-52199N"/>
<dbReference type="FunCoup" id="P51834">
    <property type="interactions" value="622"/>
</dbReference>
<dbReference type="IntAct" id="P51834">
    <property type="interactions" value="22"/>
</dbReference>
<dbReference type="STRING" id="224308.BSU15940"/>
<dbReference type="jPOST" id="P51834"/>
<dbReference type="PaxDb" id="224308-BSU15940"/>
<dbReference type="EnsemblBacteria" id="CAB13467">
    <property type="protein sequence ID" value="CAB13467"/>
    <property type="gene ID" value="BSU_15940"/>
</dbReference>
<dbReference type="GeneID" id="938085"/>
<dbReference type="KEGG" id="bsu:BSU15940"/>
<dbReference type="PATRIC" id="fig|224308.179.peg.1734"/>
<dbReference type="eggNOG" id="COG1196">
    <property type="taxonomic scope" value="Bacteria"/>
</dbReference>
<dbReference type="InParanoid" id="P51834"/>
<dbReference type="OrthoDB" id="9808768at2"/>
<dbReference type="PhylomeDB" id="P51834"/>
<dbReference type="BioCyc" id="BSUB:BSU15940-MONOMER"/>
<dbReference type="EvolutionaryTrace" id="P51834"/>
<dbReference type="Proteomes" id="UP000001570">
    <property type="component" value="Chromosome"/>
</dbReference>
<dbReference type="GO" id="GO:0005694">
    <property type="term" value="C:chromosome"/>
    <property type="evidence" value="ECO:0007669"/>
    <property type="project" value="InterPro"/>
</dbReference>
<dbReference type="GO" id="GO:0005737">
    <property type="term" value="C:cytoplasm"/>
    <property type="evidence" value="ECO:0007669"/>
    <property type="project" value="UniProtKB-SubCell"/>
</dbReference>
<dbReference type="GO" id="GO:0005524">
    <property type="term" value="F:ATP binding"/>
    <property type="evidence" value="ECO:0007669"/>
    <property type="project" value="UniProtKB-UniRule"/>
</dbReference>
<dbReference type="GO" id="GO:0016887">
    <property type="term" value="F:ATP hydrolysis activity"/>
    <property type="evidence" value="ECO:0007669"/>
    <property type="project" value="InterPro"/>
</dbReference>
<dbReference type="GO" id="GO:0003677">
    <property type="term" value="F:DNA binding"/>
    <property type="evidence" value="ECO:0007669"/>
    <property type="project" value="UniProtKB-UniRule"/>
</dbReference>
<dbReference type="GO" id="GO:0042802">
    <property type="term" value="F:identical protein binding"/>
    <property type="evidence" value="ECO:0000353"/>
    <property type="project" value="IntAct"/>
</dbReference>
<dbReference type="GO" id="GO:0030261">
    <property type="term" value="P:chromosome condensation"/>
    <property type="evidence" value="ECO:0007669"/>
    <property type="project" value="InterPro"/>
</dbReference>
<dbReference type="GO" id="GO:0007059">
    <property type="term" value="P:chromosome segregation"/>
    <property type="evidence" value="ECO:0007669"/>
    <property type="project" value="UniProtKB-UniRule"/>
</dbReference>
<dbReference type="GO" id="GO:0006260">
    <property type="term" value="P:DNA replication"/>
    <property type="evidence" value="ECO:0007669"/>
    <property type="project" value="UniProtKB-UniRule"/>
</dbReference>
<dbReference type="GO" id="GO:0007062">
    <property type="term" value="P:sister chromatid cohesion"/>
    <property type="evidence" value="ECO:0007669"/>
    <property type="project" value="InterPro"/>
</dbReference>
<dbReference type="CDD" id="cd03278">
    <property type="entry name" value="ABC_SMC_barmotin"/>
    <property type="match status" value="2"/>
</dbReference>
<dbReference type="FunFam" id="3.40.50.300:FF:000901">
    <property type="entry name" value="Chromosome partition protein Smc"/>
    <property type="match status" value="1"/>
</dbReference>
<dbReference type="FunFam" id="3.40.50.300:FF:000984">
    <property type="entry name" value="Chromosome partition protein Smc"/>
    <property type="match status" value="1"/>
</dbReference>
<dbReference type="FunFam" id="3.30.70.1620:FF:000007">
    <property type="entry name" value="Structural maintenance of chromosomes protein"/>
    <property type="match status" value="1"/>
</dbReference>
<dbReference type="Gene3D" id="1.10.287.1490">
    <property type="match status" value="1"/>
</dbReference>
<dbReference type="Gene3D" id="1.20.1060.20">
    <property type="match status" value="1"/>
</dbReference>
<dbReference type="Gene3D" id="3.30.70.1620">
    <property type="match status" value="1"/>
</dbReference>
<dbReference type="Gene3D" id="3.40.50.300">
    <property type="entry name" value="P-loop containing nucleotide triphosphate hydrolases"/>
    <property type="match status" value="2"/>
</dbReference>
<dbReference type="HAMAP" id="MF_01894">
    <property type="entry name" value="Smc_prok"/>
    <property type="match status" value="1"/>
</dbReference>
<dbReference type="InterPro" id="IPR027417">
    <property type="entry name" value="P-loop_NTPase"/>
</dbReference>
<dbReference type="InterPro" id="IPR003395">
    <property type="entry name" value="RecF/RecN/SMC_N"/>
</dbReference>
<dbReference type="InterPro" id="IPR024704">
    <property type="entry name" value="SMC"/>
</dbReference>
<dbReference type="InterPro" id="IPR010935">
    <property type="entry name" value="SMC_hinge"/>
</dbReference>
<dbReference type="InterPro" id="IPR036277">
    <property type="entry name" value="SMC_hinge_sf"/>
</dbReference>
<dbReference type="InterPro" id="IPR011890">
    <property type="entry name" value="SMC_prok"/>
</dbReference>
<dbReference type="NCBIfam" id="TIGR02168">
    <property type="entry name" value="SMC_prok_B"/>
    <property type="match status" value="1"/>
</dbReference>
<dbReference type="PANTHER" id="PTHR43977">
    <property type="entry name" value="STRUCTURAL MAINTENANCE OF CHROMOSOMES PROTEIN 3"/>
    <property type="match status" value="1"/>
</dbReference>
<dbReference type="Pfam" id="PF06470">
    <property type="entry name" value="SMC_hinge"/>
    <property type="match status" value="1"/>
</dbReference>
<dbReference type="Pfam" id="PF02463">
    <property type="entry name" value="SMC_N"/>
    <property type="match status" value="1"/>
</dbReference>
<dbReference type="PIRSF" id="PIRSF005719">
    <property type="entry name" value="SMC"/>
    <property type="match status" value="1"/>
</dbReference>
<dbReference type="SMART" id="SM00968">
    <property type="entry name" value="SMC_hinge"/>
    <property type="match status" value="1"/>
</dbReference>
<dbReference type="SUPFAM" id="SSF52540">
    <property type="entry name" value="P-loop containing nucleoside triphosphate hydrolases"/>
    <property type="match status" value="1"/>
</dbReference>
<dbReference type="SUPFAM" id="SSF75553">
    <property type="entry name" value="Smc hinge domain"/>
    <property type="match status" value="1"/>
</dbReference>
<dbReference type="SUPFAM" id="SSF57997">
    <property type="entry name" value="Tropomyosin"/>
    <property type="match status" value="1"/>
</dbReference>
<evidence type="ECO:0000255" key="1">
    <source>
        <dbReference type="HAMAP-Rule" id="MF_01894"/>
    </source>
</evidence>
<evidence type="ECO:0000269" key="2">
    <source>
    </source>
</evidence>
<evidence type="ECO:0000269" key="3">
    <source>
    </source>
</evidence>
<evidence type="ECO:0000305" key="4"/>
<evidence type="ECO:0007829" key="5">
    <source>
        <dbReference type="PDB" id="3ZGX"/>
    </source>
</evidence>
<evidence type="ECO:0007829" key="6">
    <source>
        <dbReference type="PDB" id="5H66"/>
    </source>
</evidence>
<evidence type="ECO:0007829" key="7">
    <source>
        <dbReference type="PDB" id="5H67"/>
    </source>
</evidence>
<evidence type="ECO:0007829" key="8">
    <source>
        <dbReference type="PDB" id="5NMO"/>
    </source>
</evidence>
<evidence type="ECO:0007829" key="9">
    <source>
        <dbReference type="PDB" id="5NNV"/>
    </source>
</evidence>
<proteinExistence type="evidence at protein level"/>
<reference key="1">
    <citation type="journal article" date="1996" name="Gene">
        <title>The effect of Srb, a homologue of the mammalian SRP receptor alpha-subunit, on Bacillus subtilis growth and protein translocation.</title>
        <authorList>
            <person name="Oguro A."/>
            <person name="Kakeshita H."/>
            <person name="Takamatsu H."/>
            <person name="Nakamura K."/>
            <person name="Yamane K."/>
        </authorList>
    </citation>
    <scope>NUCLEOTIDE SEQUENCE [GENOMIC DNA]</scope>
    <source>
        <strain>168</strain>
    </source>
</reference>
<reference key="2">
    <citation type="journal article" date="1997" name="Nature">
        <title>The complete genome sequence of the Gram-positive bacterium Bacillus subtilis.</title>
        <authorList>
            <person name="Kunst F."/>
            <person name="Ogasawara N."/>
            <person name="Moszer I."/>
            <person name="Albertini A.M."/>
            <person name="Alloni G."/>
            <person name="Azevedo V."/>
            <person name="Bertero M.G."/>
            <person name="Bessieres P."/>
            <person name="Bolotin A."/>
            <person name="Borchert S."/>
            <person name="Borriss R."/>
            <person name="Boursier L."/>
            <person name="Brans A."/>
            <person name="Braun M."/>
            <person name="Brignell S.C."/>
            <person name="Bron S."/>
            <person name="Brouillet S."/>
            <person name="Bruschi C.V."/>
            <person name="Caldwell B."/>
            <person name="Capuano V."/>
            <person name="Carter N.M."/>
            <person name="Choi S.-K."/>
            <person name="Codani J.-J."/>
            <person name="Connerton I.F."/>
            <person name="Cummings N.J."/>
            <person name="Daniel R.A."/>
            <person name="Denizot F."/>
            <person name="Devine K.M."/>
            <person name="Duesterhoeft A."/>
            <person name="Ehrlich S.D."/>
            <person name="Emmerson P.T."/>
            <person name="Entian K.-D."/>
            <person name="Errington J."/>
            <person name="Fabret C."/>
            <person name="Ferrari E."/>
            <person name="Foulger D."/>
            <person name="Fritz C."/>
            <person name="Fujita M."/>
            <person name="Fujita Y."/>
            <person name="Fuma S."/>
            <person name="Galizzi A."/>
            <person name="Galleron N."/>
            <person name="Ghim S.-Y."/>
            <person name="Glaser P."/>
            <person name="Goffeau A."/>
            <person name="Golightly E.J."/>
            <person name="Grandi G."/>
            <person name="Guiseppi G."/>
            <person name="Guy B.J."/>
            <person name="Haga K."/>
            <person name="Haiech J."/>
            <person name="Harwood C.R."/>
            <person name="Henaut A."/>
            <person name="Hilbert H."/>
            <person name="Holsappel S."/>
            <person name="Hosono S."/>
            <person name="Hullo M.-F."/>
            <person name="Itaya M."/>
            <person name="Jones L.-M."/>
            <person name="Joris B."/>
            <person name="Karamata D."/>
            <person name="Kasahara Y."/>
            <person name="Klaerr-Blanchard M."/>
            <person name="Klein C."/>
            <person name="Kobayashi Y."/>
            <person name="Koetter P."/>
            <person name="Koningstein G."/>
            <person name="Krogh S."/>
            <person name="Kumano M."/>
            <person name="Kurita K."/>
            <person name="Lapidus A."/>
            <person name="Lardinois S."/>
            <person name="Lauber J."/>
            <person name="Lazarevic V."/>
            <person name="Lee S.-M."/>
            <person name="Levine A."/>
            <person name="Liu H."/>
            <person name="Masuda S."/>
            <person name="Mauel C."/>
            <person name="Medigue C."/>
            <person name="Medina N."/>
            <person name="Mellado R.P."/>
            <person name="Mizuno M."/>
            <person name="Moestl D."/>
            <person name="Nakai S."/>
            <person name="Noback M."/>
            <person name="Noone D."/>
            <person name="O'Reilly M."/>
            <person name="Ogawa K."/>
            <person name="Ogiwara A."/>
            <person name="Oudega B."/>
            <person name="Park S.-H."/>
            <person name="Parro V."/>
            <person name="Pohl T.M."/>
            <person name="Portetelle D."/>
            <person name="Porwollik S."/>
            <person name="Prescott A.M."/>
            <person name="Presecan E."/>
            <person name="Pujic P."/>
            <person name="Purnelle B."/>
            <person name="Rapoport G."/>
            <person name="Rey M."/>
            <person name="Reynolds S."/>
            <person name="Rieger M."/>
            <person name="Rivolta C."/>
            <person name="Rocha E."/>
            <person name="Roche B."/>
            <person name="Rose M."/>
            <person name="Sadaie Y."/>
            <person name="Sato T."/>
            <person name="Scanlan E."/>
            <person name="Schleich S."/>
            <person name="Schroeter R."/>
            <person name="Scoffone F."/>
            <person name="Sekiguchi J."/>
            <person name="Sekowska A."/>
            <person name="Seror S.J."/>
            <person name="Serror P."/>
            <person name="Shin B.-S."/>
            <person name="Soldo B."/>
            <person name="Sorokin A."/>
            <person name="Tacconi E."/>
            <person name="Takagi T."/>
            <person name="Takahashi H."/>
            <person name="Takemaru K."/>
            <person name="Takeuchi M."/>
            <person name="Tamakoshi A."/>
            <person name="Tanaka T."/>
            <person name="Terpstra P."/>
            <person name="Tognoni A."/>
            <person name="Tosato V."/>
            <person name="Uchiyama S."/>
            <person name="Vandenbol M."/>
            <person name="Vannier F."/>
            <person name="Vassarotti A."/>
            <person name="Viari A."/>
            <person name="Wambutt R."/>
            <person name="Wedler E."/>
            <person name="Wedler H."/>
            <person name="Weitzenegger T."/>
            <person name="Winters P."/>
            <person name="Wipat A."/>
            <person name="Yamamoto H."/>
            <person name="Yamane K."/>
            <person name="Yasumoto K."/>
            <person name="Yata K."/>
            <person name="Yoshida K."/>
            <person name="Yoshikawa H.-F."/>
            <person name="Zumstein E."/>
            <person name="Yoshikawa H."/>
            <person name="Danchin A."/>
        </authorList>
    </citation>
    <scope>NUCLEOTIDE SEQUENCE [LARGE SCALE GENOMIC DNA]</scope>
    <source>
        <strain>168</strain>
    </source>
</reference>
<reference key="3">
    <citation type="journal article" date="2009" name="Microbiology">
        <title>From a consortium sequence to a unified sequence: the Bacillus subtilis 168 reference genome a decade later.</title>
        <authorList>
            <person name="Barbe V."/>
            <person name="Cruveiller S."/>
            <person name="Kunst F."/>
            <person name="Lenoble P."/>
            <person name="Meurice G."/>
            <person name="Sekowska A."/>
            <person name="Vallenet D."/>
            <person name="Wang T."/>
            <person name="Moszer I."/>
            <person name="Medigue C."/>
            <person name="Danchin A."/>
        </authorList>
    </citation>
    <scope>SEQUENCE REVISION TO 236 AND 284</scope>
</reference>
<reference key="4">
    <citation type="journal article" date="1995" name="DNA Res.">
        <title>srb: a Bacillus subtilis gene encoding a homologue of the alpha-subunit of the mammalian signal recognition particle receptor.</title>
        <authorList>
            <person name="Oguro A."/>
            <person name="Kakeshita H."/>
            <person name="Honda K."/>
            <person name="Takamatsu H."/>
            <person name="Nakamura K."/>
            <person name="Yamane K."/>
        </authorList>
    </citation>
    <scope>NUCLEOTIDE SEQUENCE [GENOMIC DNA] OF 1171-1186</scope>
    <source>
        <strain>168</strain>
    </source>
</reference>
<reference key="5">
    <citation type="journal article" date="1998" name="Genes Dev.">
        <title>Characterization of a prokaryotic SMC protein involved in chromosome partitioning.</title>
        <authorList>
            <person name="Britton R.A."/>
            <person name="Lin D.C."/>
            <person name="Grossman A.D."/>
        </authorList>
    </citation>
    <scope>FUNCTION</scope>
    <scope>SUBCELLULAR LOCATION</scope>
    <scope>DISRUPTION PHENOTYPE</scope>
    <source>
        <strain>168 / JH642</strain>
    </source>
</reference>
<reference key="6">
    <citation type="journal article" date="1998" name="Mol. Microbiol.">
        <title>A Bacillus subtilis gene-encoding protein homologous to eukaryotic SMC motor protein is necessary for chromosome partition.</title>
        <authorList>
            <person name="Moriya S."/>
            <person name="Tsujikawa E."/>
            <person name="Hassan A.K."/>
            <person name="Asai K."/>
            <person name="Kodama T."/>
            <person name="Ogasawara N."/>
        </authorList>
    </citation>
    <scope>FUNCTION</scope>
    <scope>DISRUPTION PHENOTYPE</scope>
    <source>
        <strain>168</strain>
    </source>
</reference>
<sequence length="1186" mass="135513">MFLKRLDVIGFKSFAERISVDFVKGVTAVVGPNGSGKSNITDAIRWVLGEQSARSLRGGKMEDIIFAGSDSRKRLNLAEVTLTLDNDDHFLPIDFHEVSVTRRVYRSGESEFLINNQPCRLKDIIDLFMDSGLGKEAFSIISQGKVEEILSSKAEDRRSIFEEAAGVLKYKTRKKKAENKLFETQDNLNRVEDILHELEGQVEPLKIQASIAKDYLEKKKELEHVEIALTAYDIEELHGKWSTLKEKVQMAKEEELAESSAISAKEAKIEDTRDKIQALDESVDELQQVLLVTSEELEKLEGRKEVLKERKKNAVQNQEQLEEAIVQFQQKETVLKEELSKQEAVFETLQAEVKQLRAQVKEKQQALSLHNENVEEKIEQLKSDYFELLNSQASIRNELQLLDDQMSQSAVTLQRLADNNEKHLQERHDISARKAACETEFARIEQEIHSQVGAYRDMQTKYEQKKRQYEKNESALYQAYQYVQQARSKKDMLETMQGDFSGFYQGVKEVLKAKERLGGIRGAVLELISTEQKYETAIEIALGASAQHVVTDDEQSARKAIQYLKQNSFGRATFLPLSVIRDRQLQSRDAETAARHSSFLGVASELVTFDPAYRSVIQNLLGTVLITEDLKGANELAKLLGHRYRIVTLEGDVVNPGGSMTGGAVKKKNNSLLGRSRELEDVTKRLAEMEEKTALLEQEVKTLKHSIQDMEKKLADLRETGEGLRLKQQDVKGQLYELQVAEKNINTHLELYDQEKSALSESDEERKVRKRKLEEELSAVSEKMKQLEEDIDRLTKQKQTQSSTKESLSNELTELKIAAAKKEQACKGEEDNLARLKKELTETELALKEAKEDLSFLTSEMSSSTSGEEKLEEAAKHKLNDKTKTIELIALRRDQRIKLQHGLDTYERELKEMKRLYKQKTTLLKDEEVKLGRMEVELDNLLQYLREEYSLSFEGAKEKYQLETDPEEARKRVKLIKLAIEELGTVNLGSIDEFERVNERYKFLSEQKEDLTEAKNTLFQVIEEMDEEMTKRFNDTFVQIRSHFDQVFRSLFGGGRAELRLTDPNDLLHSGVEIIAQPPGKKLQNLNLLSGGERALTAIALLFSILKVRPVPFCVLDEVEAALDEANVFRFAQYLKKYSSDTQFIVITHRKGTMEEADVLYGVTMQESGVSKVISVKLEETKEFVQ</sequence>
<feature type="chain" id="PRO_0000119028" description="Chromosome partition protein Smc">
    <location>
        <begin position="1"/>
        <end position="1186"/>
    </location>
</feature>
<feature type="domain" description="SMC hinge">
    <location>
        <begin position="519"/>
        <end position="637"/>
    </location>
</feature>
<feature type="coiled-coil region" evidence="1">
    <location>
        <begin position="167"/>
        <end position="206"/>
    </location>
</feature>
<feature type="coiled-coil region" evidence="1">
    <location>
        <begin position="259"/>
        <end position="481"/>
    </location>
</feature>
<feature type="coiled-coil region" evidence="1">
    <location>
        <begin position="672"/>
        <end position="864"/>
    </location>
</feature>
<feature type="coiled-coil region" evidence="1">
    <location>
        <begin position="893"/>
        <end position="943"/>
    </location>
</feature>
<feature type="coiled-coil region" evidence="1">
    <location>
        <begin position="990"/>
        <end position="1029"/>
    </location>
</feature>
<feature type="binding site" evidence="1">
    <location>
        <begin position="32"/>
        <end position="39"/>
    </location>
    <ligand>
        <name>ATP</name>
        <dbReference type="ChEBI" id="CHEBI:30616"/>
    </ligand>
</feature>
<feature type="sequence conflict" description="In Ref. 1; BAA10977." evidence="4" ref="1">
    <original>E</original>
    <variation>G</variation>
    <location>
        <position position="50"/>
    </location>
</feature>
<feature type="sequence conflict" description="In Ref. 1; BAA10977." evidence="4" ref="1">
    <original>E</original>
    <variation>G</variation>
    <location>
        <position position="162"/>
    </location>
</feature>
<feature type="sequence conflict" description="In Ref. 1; BAA10977." evidence="4" ref="1">
    <original>K</original>
    <variation>E</variation>
    <location>
        <position position="175"/>
    </location>
</feature>
<feature type="sequence conflict" description="In Ref. 1; BAA10977." evidence="4" ref="1">
    <original>E</original>
    <variation>G</variation>
    <location>
        <position position="178"/>
    </location>
</feature>
<feature type="sequence conflict" description="In Ref. 1; BAA10977." evidence="4" ref="1">
    <original>E</original>
    <variation>G</variation>
    <location>
        <position position="192"/>
    </location>
</feature>
<feature type="sequence conflict" description="In Ref. 1; BAA10977." evidence="4" ref="1">
    <original>A</original>
    <variation>P</variation>
    <location>
        <position position="228"/>
    </location>
</feature>
<feature type="sequence conflict" description="In Ref. 1; BAA10977." evidence="4" ref="1">
    <original>A</original>
    <variation>P</variation>
    <location>
        <position position="264"/>
    </location>
</feature>
<feature type="sequence conflict" description="In Ref. 1; BAA10977." evidence="4" ref="1">
    <original>D</original>
    <variation>G</variation>
    <location>
        <position position="271"/>
    </location>
</feature>
<feature type="sequence conflict" description="In Ref. 1; BAA10977." evidence="4" ref="1">
    <original>E</original>
    <variation>D</variation>
    <location>
        <position position="309"/>
    </location>
</feature>
<feature type="sequence conflict" description="In Ref. 1; BAA10977." evidence="4" ref="1">
    <original>KEELSKQ</original>
    <variation>TRRAFEA</variation>
    <location>
        <begin position="336"/>
        <end position="342"/>
    </location>
</feature>
<feature type="sequence conflict" description="In Ref. 1; BAA10977." evidence="4" ref="1">
    <original>Q</original>
    <variation>H</variation>
    <location>
        <position position="365"/>
    </location>
</feature>
<feature type="sequence conflict" description="In Ref. 1; BAA10977." evidence="4" ref="1">
    <original>E</original>
    <variation>K</variation>
    <location>
        <position position="438"/>
    </location>
</feature>
<feature type="sequence conflict" description="In Ref. 1; BAA10977." evidence="4" ref="1">
    <original>I</original>
    <variation>F</variation>
    <location>
        <position position="444"/>
    </location>
</feature>
<feature type="sequence conflict" description="In Ref. 1; BAA10977." evidence="4" ref="1">
    <original>A</original>
    <variation>P</variation>
    <location>
        <position position="475"/>
    </location>
</feature>
<feature type="sequence conflict" description="In Ref. 1; BAA10977." evidence="4" ref="1">
    <original>E</original>
    <variation>D</variation>
    <location>
        <position position="494"/>
    </location>
</feature>
<feature type="sequence conflict" description="In Ref. 1; BAA10977." evidence="4" ref="1">
    <original>E</original>
    <variation>D</variation>
    <location>
        <position position="515"/>
    </location>
</feature>
<feature type="sequence conflict" description="In Ref. 1; BAA10977." evidence="4" ref="1">
    <original>L</original>
    <variation>V</variation>
    <location>
        <position position="542"/>
    </location>
</feature>
<feature type="sequence conflict" description="In Ref. 1; BAA10977." evidence="4" ref="1">
    <original>A</original>
    <variation>P</variation>
    <location>
        <position position="546"/>
    </location>
</feature>
<feature type="sequence conflict" description="In Ref. 1; BAA10977." evidence="4" ref="1">
    <original>QSRDAETAARHSSFL</original>
    <variation>SKPLRGNSGPAFIISF</variation>
    <location>
        <begin position="586"/>
        <end position="600"/>
    </location>
</feature>
<feature type="sequence conflict" description="In Ref. 1; BAA10977." evidence="4" ref="1">
    <original>TVLITEDLK</original>
    <variation>NRSDYRGLKG</variation>
    <location>
        <begin position="623"/>
        <end position="631"/>
    </location>
</feature>
<feature type="sequence conflict" description="In Ref. 1; BAA10977." evidence="4" ref="1">
    <original>A</original>
    <variation>S</variation>
    <location>
        <position position="664"/>
    </location>
</feature>
<feature type="sequence conflict" description="In Ref. 1; BAA10977." evidence="4" ref="1">
    <original>S</original>
    <variation>T</variation>
    <location>
        <position position="676"/>
    </location>
</feature>
<feature type="sequence conflict" description="In Ref. 1; BAA10977." evidence="4" ref="1">
    <original>E</original>
    <variation>G</variation>
    <location>
        <position position="680"/>
    </location>
</feature>
<feature type="sequence conflict" description="In Ref. 1; BAA10977." evidence="4" ref="1">
    <original>A</original>
    <variation>S</variation>
    <location>
        <position position="694"/>
    </location>
</feature>
<feature type="sequence conflict" description="In Ref. 1; BAA10977." evidence="4" ref="1">
    <original>K</original>
    <variation>Q</variation>
    <location>
        <position position="701"/>
    </location>
</feature>
<feature type="sequence conflict" description="In Ref. 1; BAA10977." evidence="4" ref="1">
    <original>L</original>
    <variation>V</variation>
    <location>
        <position position="726"/>
    </location>
</feature>
<feature type="sequence conflict" description="In Ref. 1; BAA10977." evidence="4" ref="1">
    <original>LQV</original>
    <variation>PQF</variation>
    <location>
        <begin position="738"/>
        <end position="740"/>
    </location>
</feature>
<feature type="strand" evidence="6">
    <location>
        <begin position="2"/>
        <end position="11"/>
    </location>
</feature>
<feature type="strand" evidence="6">
    <location>
        <begin position="18"/>
        <end position="21"/>
    </location>
</feature>
<feature type="strand" evidence="6">
    <location>
        <begin position="24"/>
        <end position="30"/>
    </location>
</feature>
<feature type="helix" evidence="6">
    <location>
        <begin position="37"/>
        <end position="47"/>
    </location>
</feature>
<feature type="turn" evidence="7">
    <location>
        <begin position="53"/>
        <end position="57"/>
    </location>
</feature>
<feature type="helix" evidence="7">
    <location>
        <begin position="61"/>
        <end position="64"/>
    </location>
</feature>
<feature type="strand" evidence="6">
    <location>
        <begin position="76"/>
        <end position="85"/>
    </location>
</feature>
<feature type="strand" evidence="6">
    <location>
        <begin position="91"/>
        <end position="94"/>
    </location>
</feature>
<feature type="strand" evidence="6">
    <location>
        <begin position="96"/>
        <end position="105"/>
    </location>
</feature>
<feature type="strand" evidence="6">
    <location>
        <begin position="110"/>
        <end position="114"/>
    </location>
</feature>
<feature type="strand" evidence="6">
    <location>
        <begin position="117"/>
        <end position="119"/>
    </location>
</feature>
<feature type="helix" evidence="6">
    <location>
        <begin position="121"/>
        <end position="130"/>
    </location>
</feature>
<feature type="strand" evidence="6">
    <location>
        <begin position="140"/>
        <end position="142"/>
    </location>
</feature>
<feature type="helix" evidence="6">
    <location>
        <begin position="143"/>
        <end position="150"/>
    </location>
</feature>
<feature type="helix" evidence="6">
    <location>
        <begin position="154"/>
        <end position="165"/>
    </location>
</feature>
<feature type="helix" evidence="6">
    <location>
        <begin position="168"/>
        <end position="196"/>
    </location>
</feature>
<feature type="helix" evidence="5">
    <location>
        <begin position="236"/>
        <end position="247"/>
    </location>
</feature>
<feature type="turn" evidence="9">
    <location>
        <begin position="251"/>
        <end position="255"/>
    </location>
</feature>
<feature type="helix" evidence="9">
    <location>
        <begin position="670"/>
        <end position="690"/>
    </location>
</feature>
<feature type="helix" evidence="9">
    <location>
        <begin position="692"/>
        <end position="739"/>
    </location>
</feature>
<feature type="helix" evidence="9">
    <location>
        <begin position="742"/>
        <end position="770"/>
    </location>
</feature>
<feature type="helix" evidence="9">
    <location>
        <begin position="772"/>
        <end position="777"/>
    </location>
</feature>
<feature type="helix" evidence="9">
    <location>
        <begin position="780"/>
        <end position="782"/>
    </location>
</feature>
<feature type="helix" evidence="9">
    <location>
        <begin position="809"/>
        <end position="825"/>
    </location>
</feature>
<feature type="helix" evidence="9">
    <location>
        <begin position="828"/>
        <end position="836"/>
    </location>
</feature>
<feature type="helix" evidence="9">
    <location>
        <begin position="837"/>
        <end position="839"/>
    </location>
</feature>
<feature type="helix" evidence="9">
    <location>
        <begin position="840"/>
        <end position="846"/>
    </location>
</feature>
<feature type="helix" evidence="9">
    <location>
        <begin position="847"/>
        <end position="849"/>
    </location>
</feature>
<feature type="helix" evidence="9">
    <location>
        <begin position="851"/>
        <end position="857"/>
    </location>
</feature>
<feature type="turn" evidence="9">
    <location>
        <begin position="858"/>
        <end position="864"/>
    </location>
</feature>
<feature type="helix" evidence="8">
    <location>
        <begin position="870"/>
        <end position="915"/>
    </location>
</feature>
<feature type="helix" evidence="8">
    <location>
        <begin position="922"/>
        <end position="949"/>
    </location>
</feature>
<feature type="helix" evidence="8">
    <location>
        <begin position="953"/>
        <end position="959"/>
    </location>
</feature>
<feature type="helix" evidence="8">
    <location>
        <begin position="966"/>
        <end position="981"/>
    </location>
</feature>
<feature type="helix" evidence="6">
    <location>
        <begin position="1002"/>
        <end position="1052"/>
    </location>
</feature>
<feature type="strand" evidence="6">
    <location>
        <begin position="1056"/>
        <end position="1062"/>
    </location>
</feature>
<feature type="turn" evidence="6">
    <location>
        <begin position="1067"/>
        <end position="1069"/>
    </location>
</feature>
<feature type="strand" evidence="6">
    <location>
        <begin position="1072"/>
        <end position="1077"/>
    </location>
</feature>
<feature type="strand" evidence="5">
    <location>
        <begin position="1079"/>
        <end position="1081"/>
    </location>
</feature>
<feature type="helix" evidence="6">
    <location>
        <begin position="1086"/>
        <end position="1088"/>
    </location>
</feature>
<feature type="helix" evidence="6">
    <location>
        <begin position="1091"/>
        <end position="1108"/>
    </location>
</feature>
<feature type="strand" evidence="6">
    <location>
        <begin position="1112"/>
        <end position="1118"/>
    </location>
</feature>
<feature type="turn" evidence="6">
    <location>
        <begin position="1119"/>
        <end position="1122"/>
    </location>
</feature>
<feature type="helix" evidence="6">
    <location>
        <begin position="1125"/>
        <end position="1127"/>
    </location>
</feature>
<feature type="helix" evidence="6">
    <location>
        <begin position="1128"/>
        <end position="1138"/>
    </location>
</feature>
<feature type="turn" evidence="6">
    <location>
        <begin position="1139"/>
        <end position="1141"/>
    </location>
</feature>
<feature type="strand" evidence="6">
    <location>
        <begin position="1142"/>
        <end position="1147"/>
    </location>
</feature>
<feature type="helix" evidence="6">
    <location>
        <begin position="1151"/>
        <end position="1155"/>
    </location>
</feature>
<feature type="strand" evidence="6">
    <location>
        <begin position="1158"/>
        <end position="1167"/>
    </location>
</feature>
<feature type="strand" evidence="6">
    <location>
        <begin position="1170"/>
        <end position="1177"/>
    </location>
</feature>
<comment type="function">
    <text evidence="1 2 3">Required for chromosome condensation and partitioning.</text>
</comment>
<comment type="subunit">
    <text evidence="1">Homodimer.</text>
</comment>
<comment type="interaction">
    <interactant intactId="EBI-2121372">
        <id>P51834</id>
    </interactant>
    <interactant intactId="EBI-2121359">
        <id>P35154</id>
        <label>scpA</label>
    </interactant>
    <organismsDiffer>false</organismsDiffer>
    <experiments>20</experiments>
</comment>
<comment type="interaction">
    <interactant intactId="EBI-2121372">
        <id>P51834</id>
    </interactant>
    <interactant intactId="EBI-2121445">
        <id>P35155</id>
        <label>scpB</label>
    </interactant>
    <organismsDiffer>false</organismsDiffer>
    <experiments>2</experiments>
</comment>
<comment type="interaction">
    <interactant intactId="EBI-2121372">
        <id>P51834</id>
    </interactant>
    <interactant intactId="EBI-2121372">
        <id>P51834</id>
        <label>smc</label>
    </interactant>
    <organismsDiffer>false</organismsDiffer>
    <experiments>3</experiments>
</comment>
<comment type="subcellular location">
    <subcellularLocation>
        <location evidence="1 2">Cytoplasm</location>
    </subcellularLocation>
    <text>Probably associated with the nucleoid.</text>
</comment>
<comment type="domain">
    <text evidence="1">Contains large globular domains required for ATP hydrolysis at each terminus and a third globular domain forming a flexible SMC hinge near the middle of the molecule. These domains are separated by coiled-coil structures.</text>
</comment>
<comment type="disruption phenotype">
    <text evidence="2 3">Mutants produce anucleate cells and show defects in nucleoid structure and in chromosome partitioning.</text>
</comment>
<comment type="similarity">
    <text evidence="1">Belongs to the SMC family.</text>
</comment>